<reference key="1">
    <citation type="submission" date="2006-12" db="EMBL/GenBank/DDBJ databases">
        <title>Complete sequence of Shewanella amazonensis SB2B.</title>
        <authorList>
            <consortium name="US DOE Joint Genome Institute"/>
            <person name="Copeland A."/>
            <person name="Lucas S."/>
            <person name="Lapidus A."/>
            <person name="Barry K."/>
            <person name="Detter J.C."/>
            <person name="Glavina del Rio T."/>
            <person name="Hammon N."/>
            <person name="Israni S."/>
            <person name="Dalin E."/>
            <person name="Tice H."/>
            <person name="Pitluck S."/>
            <person name="Munk A.C."/>
            <person name="Brettin T."/>
            <person name="Bruce D."/>
            <person name="Han C."/>
            <person name="Tapia R."/>
            <person name="Gilna P."/>
            <person name="Schmutz J."/>
            <person name="Larimer F."/>
            <person name="Land M."/>
            <person name="Hauser L."/>
            <person name="Kyrpides N."/>
            <person name="Mikhailova N."/>
            <person name="Fredrickson J."/>
            <person name="Richardson P."/>
        </authorList>
    </citation>
    <scope>NUCLEOTIDE SEQUENCE [LARGE SCALE GENOMIC DNA]</scope>
    <source>
        <strain>ATCC BAA-1098 / SB2B</strain>
    </source>
</reference>
<name>IF2_SHEAM</name>
<dbReference type="EMBL" id="CP000507">
    <property type="protein sequence ID" value="ABL99168.1"/>
    <property type="molecule type" value="Genomic_DNA"/>
</dbReference>
<dbReference type="RefSeq" id="WP_011759077.1">
    <property type="nucleotide sequence ID" value="NC_008700.1"/>
</dbReference>
<dbReference type="SMR" id="A1S462"/>
<dbReference type="STRING" id="326297.Sama_0961"/>
<dbReference type="KEGG" id="saz:Sama_0961"/>
<dbReference type="eggNOG" id="COG0532">
    <property type="taxonomic scope" value="Bacteria"/>
</dbReference>
<dbReference type="HOGENOM" id="CLU_006301_6_3_6"/>
<dbReference type="OrthoDB" id="9811804at2"/>
<dbReference type="Proteomes" id="UP000009175">
    <property type="component" value="Chromosome"/>
</dbReference>
<dbReference type="GO" id="GO:0005829">
    <property type="term" value="C:cytosol"/>
    <property type="evidence" value="ECO:0007669"/>
    <property type="project" value="TreeGrafter"/>
</dbReference>
<dbReference type="GO" id="GO:0005525">
    <property type="term" value="F:GTP binding"/>
    <property type="evidence" value="ECO:0007669"/>
    <property type="project" value="UniProtKB-KW"/>
</dbReference>
<dbReference type="GO" id="GO:0003924">
    <property type="term" value="F:GTPase activity"/>
    <property type="evidence" value="ECO:0007669"/>
    <property type="project" value="UniProtKB-UniRule"/>
</dbReference>
<dbReference type="GO" id="GO:0097216">
    <property type="term" value="F:guanosine tetraphosphate binding"/>
    <property type="evidence" value="ECO:0007669"/>
    <property type="project" value="UniProtKB-ARBA"/>
</dbReference>
<dbReference type="GO" id="GO:0003743">
    <property type="term" value="F:translation initiation factor activity"/>
    <property type="evidence" value="ECO:0007669"/>
    <property type="project" value="UniProtKB-UniRule"/>
</dbReference>
<dbReference type="CDD" id="cd01887">
    <property type="entry name" value="IF2_eIF5B"/>
    <property type="match status" value="1"/>
</dbReference>
<dbReference type="CDD" id="cd03702">
    <property type="entry name" value="IF2_mtIF2_II"/>
    <property type="match status" value="1"/>
</dbReference>
<dbReference type="CDD" id="cd03692">
    <property type="entry name" value="mtIF2_IVc"/>
    <property type="match status" value="1"/>
</dbReference>
<dbReference type="FunFam" id="2.40.30.10:FF:000007">
    <property type="entry name" value="Translation initiation factor IF-2"/>
    <property type="match status" value="1"/>
</dbReference>
<dbReference type="FunFam" id="2.40.30.10:FF:000008">
    <property type="entry name" value="Translation initiation factor IF-2"/>
    <property type="match status" value="1"/>
</dbReference>
<dbReference type="FunFam" id="3.40.50.10050:FF:000001">
    <property type="entry name" value="Translation initiation factor IF-2"/>
    <property type="match status" value="1"/>
</dbReference>
<dbReference type="FunFam" id="3.40.50.300:FF:000019">
    <property type="entry name" value="Translation initiation factor IF-2"/>
    <property type="match status" value="1"/>
</dbReference>
<dbReference type="Gene3D" id="3.40.50.300">
    <property type="entry name" value="P-loop containing nucleotide triphosphate hydrolases"/>
    <property type="match status" value="1"/>
</dbReference>
<dbReference type="Gene3D" id="3.30.56.50">
    <property type="entry name" value="Putative DNA-binding domain, N-terminal subdomain of bacterial translation initiation factor IF2"/>
    <property type="match status" value="1"/>
</dbReference>
<dbReference type="Gene3D" id="2.40.30.10">
    <property type="entry name" value="Translation factors"/>
    <property type="match status" value="2"/>
</dbReference>
<dbReference type="Gene3D" id="3.40.50.10050">
    <property type="entry name" value="Translation initiation factor IF- 2, domain 3"/>
    <property type="match status" value="1"/>
</dbReference>
<dbReference type="HAMAP" id="MF_00100_B">
    <property type="entry name" value="IF_2_B"/>
    <property type="match status" value="1"/>
</dbReference>
<dbReference type="InterPro" id="IPR009061">
    <property type="entry name" value="DNA-bd_dom_put_sf"/>
</dbReference>
<dbReference type="InterPro" id="IPR053905">
    <property type="entry name" value="EF-G-like_DII"/>
</dbReference>
<dbReference type="InterPro" id="IPR004161">
    <property type="entry name" value="EFTu-like_2"/>
</dbReference>
<dbReference type="InterPro" id="IPR013575">
    <property type="entry name" value="IF2_assoc_dom_bac"/>
</dbReference>
<dbReference type="InterPro" id="IPR044145">
    <property type="entry name" value="IF2_II"/>
</dbReference>
<dbReference type="InterPro" id="IPR006847">
    <property type="entry name" value="IF2_N"/>
</dbReference>
<dbReference type="InterPro" id="IPR027417">
    <property type="entry name" value="P-loop_NTPase"/>
</dbReference>
<dbReference type="InterPro" id="IPR005225">
    <property type="entry name" value="Small_GTP-bd"/>
</dbReference>
<dbReference type="InterPro" id="IPR000795">
    <property type="entry name" value="T_Tr_GTP-bd_dom"/>
</dbReference>
<dbReference type="InterPro" id="IPR000178">
    <property type="entry name" value="TF_IF2_bacterial-like"/>
</dbReference>
<dbReference type="InterPro" id="IPR015760">
    <property type="entry name" value="TIF_IF2"/>
</dbReference>
<dbReference type="InterPro" id="IPR023115">
    <property type="entry name" value="TIF_IF2_dom3"/>
</dbReference>
<dbReference type="InterPro" id="IPR036925">
    <property type="entry name" value="TIF_IF2_dom3_sf"/>
</dbReference>
<dbReference type="InterPro" id="IPR009000">
    <property type="entry name" value="Transl_B-barrel_sf"/>
</dbReference>
<dbReference type="NCBIfam" id="TIGR00487">
    <property type="entry name" value="IF-2"/>
    <property type="match status" value="1"/>
</dbReference>
<dbReference type="NCBIfam" id="TIGR00231">
    <property type="entry name" value="small_GTP"/>
    <property type="match status" value="1"/>
</dbReference>
<dbReference type="PANTHER" id="PTHR43381:SF5">
    <property type="entry name" value="TR-TYPE G DOMAIN-CONTAINING PROTEIN"/>
    <property type="match status" value="1"/>
</dbReference>
<dbReference type="PANTHER" id="PTHR43381">
    <property type="entry name" value="TRANSLATION INITIATION FACTOR IF-2-RELATED"/>
    <property type="match status" value="1"/>
</dbReference>
<dbReference type="Pfam" id="PF22042">
    <property type="entry name" value="EF-G_D2"/>
    <property type="match status" value="1"/>
</dbReference>
<dbReference type="Pfam" id="PF00009">
    <property type="entry name" value="GTP_EFTU"/>
    <property type="match status" value="1"/>
</dbReference>
<dbReference type="Pfam" id="PF03144">
    <property type="entry name" value="GTP_EFTU_D2"/>
    <property type="match status" value="1"/>
</dbReference>
<dbReference type="Pfam" id="PF11987">
    <property type="entry name" value="IF-2"/>
    <property type="match status" value="1"/>
</dbReference>
<dbReference type="Pfam" id="PF08364">
    <property type="entry name" value="IF2_assoc"/>
    <property type="match status" value="1"/>
</dbReference>
<dbReference type="Pfam" id="PF04760">
    <property type="entry name" value="IF2_N"/>
    <property type="match status" value="2"/>
</dbReference>
<dbReference type="SUPFAM" id="SSF52156">
    <property type="entry name" value="Initiation factor IF2/eIF5b, domain 3"/>
    <property type="match status" value="1"/>
</dbReference>
<dbReference type="SUPFAM" id="SSF52540">
    <property type="entry name" value="P-loop containing nucleoside triphosphate hydrolases"/>
    <property type="match status" value="1"/>
</dbReference>
<dbReference type="SUPFAM" id="SSF46955">
    <property type="entry name" value="Putative DNA-binding domain"/>
    <property type="match status" value="1"/>
</dbReference>
<dbReference type="SUPFAM" id="SSF50447">
    <property type="entry name" value="Translation proteins"/>
    <property type="match status" value="2"/>
</dbReference>
<dbReference type="PROSITE" id="PS51722">
    <property type="entry name" value="G_TR_2"/>
    <property type="match status" value="1"/>
</dbReference>
<dbReference type="PROSITE" id="PS01176">
    <property type="entry name" value="IF2"/>
    <property type="match status" value="1"/>
</dbReference>
<keyword id="KW-0963">Cytoplasm</keyword>
<keyword id="KW-0342">GTP-binding</keyword>
<keyword id="KW-0396">Initiation factor</keyword>
<keyword id="KW-0547">Nucleotide-binding</keyword>
<keyword id="KW-0648">Protein biosynthesis</keyword>
<keyword id="KW-1185">Reference proteome</keyword>
<proteinExistence type="inferred from homology"/>
<comment type="function">
    <text evidence="2">One of the essential components for the initiation of protein synthesis. Protects formylmethionyl-tRNA from spontaneous hydrolysis and promotes its binding to the 30S ribosomal subunits. Also involved in the hydrolysis of GTP during the formation of the 70S ribosomal complex.</text>
</comment>
<comment type="subcellular location">
    <subcellularLocation>
        <location evidence="2">Cytoplasm</location>
    </subcellularLocation>
</comment>
<comment type="similarity">
    <text evidence="2">Belongs to the TRAFAC class translation factor GTPase superfamily. Classic translation factor GTPase family. IF-2 subfamily.</text>
</comment>
<evidence type="ECO:0000250" key="1"/>
<evidence type="ECO:0000255" key="2">
    <source>
        <dbReference type="HAMAP-Rule" id="MF_00100"/>
    </source>
</evidence>
<evidence type="ECO:0000256" key="3">
    <source>
        <dbReference type="SAM" id="MobiDB-lite"/>
    </source>
</evidence>
<protein>
    <recommendedName>
        <fullName evidence="2">Translation initiation factor IF-2</fullName>
    </recommendedName>
</protein>
<accession>A1S462</accession>
<feature type="chain" id="PRO_1000008327" description="Translation initiation factor IF-2">
    <location>
        <begin position="1"/>
        <end position="882"/>
    </location>
</feature>
<feature type="domain" description="tr-type G">
    <location>
        <begin position="382"/>
        <end position="551"/>
    </location>
</feature>
<feature type="region of interest" description="Disordered" evidence="3">
    <location>
        <begin position="67"/>
        <end position="202"/>
    </location>
</feature>
<feature type="region of interest" description="Disordered" evidence="3">
    <location>
        <begin position="223"/>
        <end position="278"/>
    </location>
</feature>
<feature type="region of interest" description="G1" evidence="1">
    <location>
        <begin position="391"/>
        <end position="398"/>
    </location>
</feature>
<feature type="region of interest" description="G2" evidence="1">
    <location>
        <begin position="416"/>
        <end position="420"/>
    </location>
</feature>
<feature type="region of interest" description="G3" evidence="1">
    <location>
        <begin position="437"/>
        <end position="440"/>
    </location>
</feature>
<feature type="region of interest" description="G4" evidence="1">
    <location>
        <begin position="491"/>
        <end position="494"/>
    </location>
</feature>
<feature type="region of interest" description="G5" evidence="1">
    <location>
        <begin position="527"/>
        <end position="529"/>
    </location>
</feature>
<feature type="compositionally biased region" description="Basic and acidic residues" evidence="3">
    <location>
        <begin position="95"/>
        <end position="152"/>
    </location>
</feature>
<feature type="compositionally biased region" description="Basic and acidic residues" evidence="3">
    <location>
        <begin position="161"/>
        <end position="202"/>
    </location>
</feature>
<feature type="compositionally biased region" description="Basic residues" evidence="3">
    <location>
        <begin position="251"/>
        <end position="264"/>
    </location>
</feature>
<feature type="compositionally biased region" description="Basic and acidic residues" evidence="3">
    <location>
        <begin position="265"/>
        <end position="274"/>
    </location>
</feature>
<feature type="binding site" evidence="2">
    <location>
        <begin position="391"/>
        <end position="398"/>
    </location>
    <ligand>
        <name>GTP</name>
        <dbReference type="ChEBI" id="CHEBI:37565"/>
    </ligand>
</feature>
<feature type="binding site" evidence="2">
    <location>
        <begin position="437"/>
        <end position="441"/>
    </location>
    <ligand>
        <name>GTP</name>
        <dbReference type="ChEBI" id="CHEBI:37565"/>
    </ligand>
</feature>
<feature type="binding site" evidence="2">
    <location>
        <begin position="491"/>
        <end position="494"/>
    </location>
    <ligand>
        <name>GTP</name>
        <dbReference type="ChEBI" id="CHEBI:37565"/>
    </ligand>
</feature>
<organism>
    <name type="scientific">Shewanella amazonensis (strain ATCC BAA-1098 / SB2B)</name>
    <dbReference type="NCBI Taxonomy" id="326297"/>
    <lineage>
        <taxon>Bacteria</taxon>
        <taxon>Pseudomonadati</taxon>
        <taxon>Pseudomonadota</taxon>
        <taxon>Gammaproteobacteria</taxon>
        <taxon>Alteromonadales</taxon>
        <taxon>Shewanellaceae</taxon>
        <taxon>Shewanella</taxon>
    </lineage>
</organism>
<gene>
    <name evidence="2" type="primary">infB</name>
    <name type="ordered locus">Sama_0961</name>
</gene>
<sequence length="882" mass="95960">MTEITVEKLATEVGKTVDRLIEQFAQAGIKKAKADTVSESEKQQLLDFLKKQHGADAQPTKMTLQRKTVSTLSVSSGGGQSKDVKVEVRKKRTFVKRDGNEAALKAEEEARAQAEAQAKAEAEAKAKAEAEAKAKADAEAKAKAKAEAEAKAKASASAAKEQPKPVESEEAKAEAARLKSQQEEAAKSKAAQEEAAAKEKARLLAEENAARWAEEERRRIEAERYGDHHVTTSKVARAAEDSADLDDEKRGRRNRNKTQTKSKRGGKDAREGREKHMKYKSTPESMAHGFNKPVAAVTRDVRIGETVTVAELAQKMAVKATEIIKAMMKMGSMVTINQVLDQETAQLVAEEMGHKVVLLRENELEHQVLADRDDEGTTKLEPRAPVVTIMGHVDHGKTSLLDYIRRTKVAAGEAGGITQHIGAYHVETDNGMITFLDTPGHAAFTAMRARGAKATDIVILVVAADDGVMPQTIEAIQHAKAGNVPLIVAVNKMDKPEADIDRVKNELSQHGVMSEDWGGENMFCYVSAKTGQGVDELLEAILLQAEVLELKAVRDGMAAGVVIESQLDKGRGPVATVLVQEGTLRQGDIVLCGLEYGKIRAMKDENGRPIMEAGPSIPVEILGLSGVPSAGDEATVVRDERKAREVALYRQGKFRDVKLARQQKSKLENMFANMTEGEVQELNIVLKADVQGSLEAITDSLRKLSTDEVKVNIIASGVGALTETDATLAAASNAIMVGFNVRADAQARKTIESEAVDLRYYSVIYDLIDEVKSAMSGMLSPEFKQQIIGLAEVRDVFKSPKLGAIAGCMVIEGIVKRSAPIRVLRENVVIYEGELESLRRFKDDVNEVRNGMECGIGVKNYNDVRVGDQIEVFETIEVARTL</sequence>